<organism>
    <name type="scientific">Homo sapiens</name>
    <name type="common">Human</name>
    <dbReference type="NCBI Taxonomy" id="9606"/>
    <lineage>
        <taxon>Eukaryota</taxon>
        <taxon>Metazoa</taxon>
        <taxon>Chordata</taxon>
        <taxon>Craniata</taxon>
        <taxon>Vertebrata</taxon>
        <taxon>Euteleostomi</taxon>
        <taxon>Mammalia</taxon>
        <taxon>Eutheria</taxon>
        <taxon>Euarchontoglires</taxon>
        <taxon>Primates</taxon>
        <taxon>Haplorrhini</taxon>
        <taxon>Catarrhini</taxon>
        <taxon>Hominidae</taxon>
        <taxon>Homo</taxon>
    </lineage>
</organism>
<accession>Q9ULS6</accession>
<accession>A8KAN1</accession>
<gene>
    <name evidence="4" type="primary">KCNS2</name>
    <name type="synonym">KIAA1144</name>
</gene>
<name>KCNS2_HUMAN</name>
<proteinExistence type="evidence at protein level"/>
<protein>
    <recommendedName>
        <fullName evidence="3">Delayed-rectifier potassium channel regulatory subunit KCNS2</fullName>
    </recommendedName>
    <alternativeName>
        <fullName>Delayed-rectifier K(+) channel alpha subunit 2</fullName>
    </alternativeName>
    <alternativeName>
        <fullName>Delayed-rectifier potassium channel subunit Kv9.2</fullName>
    </alternativeName>
    <alternativeName>
        <fullName>Potassium voltage-gated channel subfamily S member 2</fullName>
    </alternativeName>
</protein>
<comment type="function">
    <text evidence="1">Potassium channel regulatory subunit that modulate the delayed rectifier voltage-gated potassium channel activity of KCNB1 and KCNB2 by altering their kinetics, expression levels, and shifting the half-inactivation potential to more polarized values. While it does not form functional channels on its own, it can form functional heterotetrameric channels with KCNB1 and KCNB2. Each regulatory subunit has unique regulatory properties that can lead to extensive inhibition, significant changes in kinetics, and/or substantial shifts in the voltage dependencies of the inactivation process.</text>
</comment>
<comment type="subunit">
    <text evidence="1">Heterotetramer with KCNB1 and KCNB2. Does not form homomultimers.</text>
</comment>
<comment type="interaction">
    <interactant intactId="EBI-10323864">
        <id>Q9ULS6</id>
    </interactant>
    <interactant intactId="EBI-3867333">
        <id>A8MQ03</id>
        <label>CYSRT1</label>
    </interactant>
    <organismsDiffer>false</organismsDiffer>
    <experiments>3</experiments>
</comment>
<comment type="interaction">
    <interactant intactId="EBI-10323864">
        <id>Q9ULS6</id>
    </interactant>
    <interactant intactId="EBI-743099">
        <id>Q969F0</id>
        <label>FATE1</label>
    </interactant>
    <organismsDiffer>false</organismsDiffer>
    <experiments>6</experiments>
</comment>
<comment type="interaction">
    <interactant intactId="EBI-10323864">
        <id>Q9ULS6</id>
    </interactant>
    <interactant intactId="EBI-22310682">
        <id>P0DPK4</id>
        <label>NOTCH2NLC</label>
    </interactant>
    <organismsDiffer>false</organismsDiffer>
    <experiments>3</experiments>
</comment>
<comment type="subcellular location">
    <subcellularLocation>
        <location evidence="1">Cell membrane</location>
        <topology evidence="1">Multi-pass membrane protein</topology>
    </subcellularLocation>
    <text evidence="1">May not reach the plasma membrane but remain in an intracellular compartment in the absence of KCNB1 or KCNB2.</text>
</comment>
<comment type="domain">
    <text evidence="2">The transmembrane segment S4 functions as a voltage-sensor and is characterized by a series of positively charged amino acids at every third position. Channel opening and closing is effected by a conformation change that affects the position and orientation of the voltage-sensor paddle formed by S3 and S4 within the membrane. A transmembrane electric field that is positive inside would push the positively charged S4 segment outwards, thereby opening the pore, while a field that is negative inside would pull the S4 segment inwards and close the pore. Changes in the position and orientation of S4 are then transmitted to the activation gate formed by the inner helix bundle via the S4-S5 linker region.</text>
</comment>
<comment type="similarity">
    <text evidence="3">Belongs to the potassium channel family. S (TC 1.A.1.2) subfamily. Kv9.2/KCNS2 sub-subfamily.</text>
</comment>
<comment type="sequence caution" evidence="3">
    <conflict type="erroneous initiation">
        <sequence resource="EMBL-CDS" id="BAA86458"/>
    </conflict>
</comment>
<feature type="chain" id="PRO_0000054084" description="Delayed-rectifier potassium channel regulatory subunit KCNS2">
    <location>
        <begin position="1"/>
        <end position="477"/>
    </location>
</feature>
<feature type="topological domain" description="Cytoplasmic" evidence="2">
    <location>
        <begin position="1"/>
        <end position="184"/>
    </location>
</feature>
<feature type="transmembrane region" description="Helical; Name=Segment S1" evidence="2">
    <location>
        <begin position="185"/>
        <end position="206"/>
    </location>
</feature>
<feature type="topological domain" description="Extracellular" evidence="2">
    <location>
        <begin position="207"/>
        <end position="225"/>
    </location>
</feature>
<feature type="transmembrane region" description="Helical; Name=Segment S2" evidence="2">
    <location>
        <begin position="226"/>
        <end position="248"/>
    </location>
</feature>
<feature type="topological domain" description="Cytoplasmic" evidence="2">
    <location>
        <begin position="249"/>
        <end position="259"/>
    </location>
</feature>
<feature type="transmembrane region" description="Helical; Name=Segment S3" evidence="2">
    <location>
        <begin position="260"/>
        <end position="280"/>
    </location>
</feature>
<feature type="topological domain" description="Extracellular" evidence="2">
    <location>
        <begin position="281"/>
        <end position="290"/>
    </location>
</feature>
<feature type="transmembrane region" description="Helical; Voltage-sensor; Name=Segment S4" evidence="2">
    <location>
        <begin position="291"/>
        <end position="311"/>
    </location>
</feature>
<feature type="topological domain" description="Cytoplasmic" evidence="2">
    <location>
        <begin position="312"/>
        <end position="326"/>
    </location>
</feature>
<feature type="transmembrane region" description="Helical; Name=Segment S5" evidence="2">
    <location>
        <begin position="327"/>
        <end position="348"/>
    </location>
</feature>
<feature type="topological domain" description="Extracellular" evidence="2">
    <location>
        <begin position="349"/>
        <end position="361"/>
    </location>
</feature>
<feature type="intramembrane region" description="Helical; Name=Pore helix" evidence="2">
    <location>
        <begin position="362"/>
        <end position="373"/>
    </location>
</feature>
<feature type="intramembrane region" evidence="2">
    <location>
        <begin position="374"/>
        <end position="381"/>
    </location>
</feature>
<feature type="topological domain" description="Extracellular" evidence="2">
    <location>
        <begin position="382"/>
        <end position="388"/>
    </location>
</feature>
<feature type="transmembrane region" description="Helical; Name=Segment S6" evidence="2">
    <location>
        <begin position="389"/>
        <end position="417"/>
    </location>
</feature>
<feature type="topological domain" description="Cytoplasmic" evidence="2">
    <location>
        <begin position="418"/>
        <end position="477"/>
    </location>
</feature>
<feature type="short sequence motif" description="Selectivity filter" evidence="2">
    <location>
        <begin position="374"/>
        <end position="379"/>
    </location>
</feature>
<keyword id="KW-1003">Cell membrane</keyword>
<keyword id="KW-0407">Ion channel</keyword>
<keyword id="KW-0406">Ion transport</keyword>
<keyword id="KW-0472">Membrane</keyword>
<keyword id="KW-0630">Potassium</keyword>
<keyword id="KW-0631">Potassium channel</keyword>
<keyword id="KW-0633">Potassium transport</keyword>
<keyword id="KW-1267">Proteomics identification</keyword>
<keyword id="KW-1185">Reference proteome</keyword>
<keyword id="KW-0812">Transmembrane</keyword>
<keyword id="KW-1133">Transmembrane helix</keyword>
<keyword id="KW-0813">Transport</keyword>
<keyword id="KW-0851">Voltage-gated channel</keyword>
<sequence>MTGQSLWDVSEANVEDGEIRINVGGFKRRLRSHTLLRFPETRLGRLLLCHSREAILELCDDYDDVQREFYFDRNPELFPYVLHFYHTGKLHVMAELCVFSFSQEIEYWGINEFFIDSCCSYSYHGRKVEPEQEKWDEQSDQESTTSSFDEILAFYNDASKFDGQPLGNFRRQLWLALDNPGYSVLSRVFSILSILVVMGSIITMCLNSLPDFQIPDSQGNPGEDPRFEIVEHFGIAWFTFELVARFAVAPDFLKFFKNALNLIDLMSIVPFYITLVVNLVVESTPTLANLGRVAQVLRLMRIFRILKLARHSTGLRSLGATLKYSYKEVGLLLLYLSVGISIFSVVAYTIEKEENEGLATIPACWWWATVSMTTVGYGDVVPGTTAGKLTASACILAGILVVVLPITLIFNKFSHFYRRQKQLESAMRSCDFGDGMKEVPSVNLRDYYAHKVKSLMASLTNMSRSSPSELSLNDSLR</sequence>
<reference key="1">
    <citation type="journal article" date="1999" name="DNA Res.">
        <title>Characterization of cDNA clones selected by the GeneMark analysis from size-fractionated cDNA libraries from human brain.</title>
        <authorList>
            <person name="Hirosawa M."/>
            <person name="Nagase T."/>
            <person name="Ishikawa K."/>
            <person name="Kikuno R."/>
            <person name="Nomura N."/>
            <person name="Ohara O."/>
        </authorList>
    </citation>
    <scope>NUCLEOTIDE SEQUENCE [LARGE SCALE MRNA]</scope>
    <source>
        <tissue>Brain</tissue>
    </source>
</reference>
<reference key="2">
    <citation type="journal article" date="2004" name="Nat. Genet.">
        <title>Complete sequencing and characterization of 21,243 full-length human cDNAs.</title>
        <authorList>
            <person name="Ota T."/>
            <person name="Suzuki Y."/>
            <person name="Nishikawa T."/>
            <person name="Otsuki T."/>
            <person name="Sugiyama T."/>
            <person name="Irie R."/>
            <person name="Wakamatsu A."/>
            <person name="Hayashi K."/>
            <person name="Sato H."/>
            <person name="Nagai K."/>
            <person name="Kimura K."/>
            <person name="Makita H."/>
            <person name="Sekine M."/>
            <person name="Obayashi M."/>
            <person name="Nishi T."/>
            <person name="Shibahara T."/>
            <person name="Tanaka T."/>
            <person name="Ishii S."/>
            <person name="Yamamoto J."/>
            <person name="Saito K."/>
            <person name="Kawai Y."/>
            <person name="Isono Y."/>
            <person name="Nakamura Y."/>
            <person name="Nagahari K."/>
            <person name="Murakami K."/>
            <person name="Yasuda T."/>
            <person name="Iwayanagi T."/>
            <person name="Wagatsuma M."/>
            <person name="Shiratori A."/>
            <person name="Sudo H."/>
            <person name="Hosoiri T."/>
            <person name="Kaku Y."/>
            <person name="Kodaira H."/>
            <person name="Kondo H."/>
            <person name="Sugawara M."/>
            <person name="Takahashi M."/>
            <person name="Kanda K."/>
            <person name="Yokoi T."/>
            <person name="Furuya T."/>
            <person name="Kikkawa E."/>
            <person name="Omura Y."/>
            <person name="Abe K."/>
            <person name="Kamihara K."/>
            <person name="Katsuta N."/>
            <person name="Sato K."/>
            <person name="Tanikawa M."/>
            <person name="Yamazaki M."/>
            <person name="Ninomiya K."/>
            <person name="Ishibashi T."/>
            <person name="Yamashita H."/>
            <person name="Murakawa K."/>
            <person name="Fujimori K."/>
            <person name="Tanai H."/>
            <person name="Kimata M."/>
            <person name="Watanabe M."/>
            <person name="Hiraoka S."/>
            <person name="Chiba Y."/>
            <person name="Ishida S."/>
            <person name="Ono Y."/>
            <person name="Takiguchi S."/>
            <person name="Watanabe S."/>
            <person name="Yosida M."/>
            <person name="Hotuta T."/>
            <person name="Kusano J."/>
            <person name="Kanehori K."/>
            <person name="Takahashi-Fujii A."/>
            <person name="Hara H."/>
            <person name="Tanase T.-O."/>
            <person name="Nomura Y."/>
            <person name="Togiya S."/>
            <person name="Komai F."/>
            <person name="Hara R."/>
            <person name="Takeuchi K."/>
            <person name="Arita M."/>
            <person name="Imose N."/>
            <person name="Musashino K."/>
            <person name="Yuuki H."/>
            <person name="Oshima A."/>
            <person name="Sasaki N."/>
            <person name="Aotsuka S."/>
            <person name="Yoshikawa Y."/>
            <person name="Matsunawa H."/>
            <person name="Ichihara T."/>
            <person name="Shiohata N."/>
            <person name="Sano S."/>
            <person name="Moriya S."/>
            <person name="Momiyama H."/>
            <person name="Satoh N."/>
            <person name="Takami S."/>
            <person name="Terashima Y."/>
            <person name="Suzuki O."/>
            <person name="Nakagawa S."/>
            <person name="Senoh A."/>
            <person name="Mizoguchi H."/>
            <person name="Goto Y."/>
            <person name="Shimizu F."/>
            <person name="Wakebe H."/>
            <person name="Hishigaki H."/>
            <person name="Watanabe T."/>
            <person name="Sugiyama A."/>
            <person name="Takemoto M."/>
            <person name="Kawakami B."/>
            <person name="Yamazaki M."/>
            <person name="Watanabe K."/>
            <person name="Kumagai A."/>
            <person name="Itakura S."/>
            <person name="Fukuzumi Y."/>
            <person name="Fujimori Y."/>
            <person name="Komiyama M."/>
            <person name="Tashiro H."/>
            <person name="Tanigami A."/>
            <person name="Fujiwara T."/>
            <person name="Ono T."/>
            <person name="Yamada K."/>
            <person name="Fujii Y."/>
            <person name="Ozaki K."/>
            <person name="Hirao M."/>
            <person name="Ohmori Y."/>
            <person name="Kawabata A."/>
            <person name="Hikiji T."/>
            <person name="Kobatake N."/>
            <person name="Inagaki H."/>
            <person name="Ikema Y."/>
            <person name="Okamoto S."/>
            <person name="Okitani R."/>
            <person name="Kawakami T."/>
            <person name="Noguchi S."/>
            <person name="Itoh T."/>
            <person name="Shigeta K."/>
            <person name="Senba T."/>
            <person name="Matsumura K."/>
            <person name="Nakajima Y."/>
            <person name="Mizuno T."/>
            <person name="Morinaga M."/>
            <person name="Sasaki M."/>
            <person name="Togashi T."/>
            <person name="Oyama M."/>
            <person name="Hata H."/>
            <person name="Watanabe M."/>
            <person name="Komatsu T."/>
            <person name="Mizushima-Sugano J."/>
            <person name="Satoh T."/>
            <person name="Shirai Y."/>
            <person name="Takahashi Y."/>
            <person name="Nakagawa K."/>
            <person name="Okumura K."/>
            <person name="Nagase T."/>
            <person name="Nomura N."/>
            <person name="Kikuchi H."/>
            <person name="Masuho Y."/>
            <person name="Yamashita R."/>
            <person name="Nakai K."/>
            <person name="Yada T."/>
            <person name="Nakamura Y."/>
            <person name="Ohara O."/>
            <person name="Isogai T."/>
            <person name="Sugano S."/>
        </authorList>
    </citation>
    <scope>NUCLEOTIDE SEQUENCE [LARGE SCALE MRNA]</scope>
    <source>
        <tissue>Uterus</tissue>
    </source>
</reference>
<reference key="3">
    <citation type="submission" date="2005-07" db="EMBL/GenBank/DDBJ databases">
        <authorList>
            <person name="Mural R.J."/>
            <person name="Istrail S."/>
            <person name="Sutton G.G."/>
            <person name="Florea L."/>
            <person name="Halpern A.L."/>
            <person name="Mobarry C.M."/>
            <person name="Lippert R."/>
            <person name="Walenz B."/>
            <person name="Shatkay H."/>
            <person name="Dew I."/>
            <person name="Miller J.R."/>
            <person name="Flanigan M.J."/>
            <person name="Edwards N.J."/>
            <person name="Bolanos R."/>
            <person name="Fasulo D."/>
            <person name="Halldorsson B.V."/>
            <person name="Hannenhalli S."/>
            <person name="Turner R."/>
            <person name="Yooseph S."/>
            <person name="Lu F."/>
            <person name="Nusskern D.R."/>
            <person name="Shue B.C."/>
            <person name="Zheng X.H."/>
            <person name="Zhong F."/>
            <person name="Delcher A.L."/>
            <person name="Huson D.H."/>
            <person name="Kravitz S.A."/>
            <person name="Mouchard L."/>
            <person name="Reinert K."/>
            <person name="Remington K.A."/>
            <person name="Clark A.G."/>
            <person name="Waterman M.S."/>
            <person name="Eichler E.E."/>
            <person name="Adams M.D."/>
            <person name="Hunkapiller M.W."/>
            <person name="Myers E.W."/>
            <person name="Venter J.C."/>
        </authorList>
    </citation>
    <scope>NUCLEOTIDE SEQUENCE [LARGE SCALE GENOMIC DNA]</scope>
</reference>
<reference key="4">
    <citation type="journal article" date="2004" name="Genome Res.">
        <title>The status, quality, and expansion of the NIH full-length cDNA project: the Mammalian Gene Collection (MGC).</title>
        <authorList>
            <consortium name="The MGC Project Team"/>
        </authorList>
    </citation>
    <scope>NUCLEOTIDE SEQUENCE [LARGE SCALE MRNA]</scope>
    <source>
        <tissue>Brain</tissue>
    </source>
</reference>
<dbReference type="EMBL" id="AB032970">
    <property type="protein sequence ID" value="BAA86458.1"/>
    <property type="status" value="ALT_INIT"/>
    <property type="molecule type" value="mRNA"/>
</dbReference>
<dbReference type="EMBL" id="AK293096">
    <property type="protein sequence ID" value="BAF85785.1"/>
    <property type="molecule type" value="mRNA"/>
</dbReference>
<dbReference type="EMBL" id="CH471060">
    <property type="protein sequence ID" value="EAW91780.1"/>
    <property type="molecule type" value="Genomic_DNA"/>
</dbReference>
<dbReference type="EMBL" id="BC027932">
    <property type="protein sequence ID" value="AAH27932.1"/>
    <property type="molecule type" value="mRNA"/>
</dbReference>
<dbReference type="EMBL" id="BC034778">
    <property type="protein sequence ID" value="AAH34778.1"/>
    <property type="molecule type" value="mRNA"/>
</dbReference>
<dbReference type="CCDS" id="CCDS6279.1"/>
<dbReference type="RefSeq" id="NP_065748.1">
    <property type="nucleotide sequence ID" value="NM_020697.4"/>
</dbReference>
<dbReference type="SMR" id="Q9ULS6"/>
<dbReference type="BioGRID" id="109989">
    <property type="interactions" value="9"/>
</dbReference>
<dbReference type="FunCoup" id="Q9ULS6">
    <property type="interactions" value="44"/>
</dbReference>
<dbReference type="IntAct" id="Q9ULS6">
    <property type="interactions" value="3"/>
</dbReference>
<dbReference type="STRING" id="9606.ENSP00000287042"/>
<dbReference type="ChEMBL" id="CHEMBL2362996"/>
<dbReference type="DrugCentral" id="Q9ULS6"/>
<dbReference type="TCDB" id="1.A.1.2.16">
    <property type="family name" value="the voltage-gated ion channel (vic) superfamily"/>
</dbReference>
<dbReference type="iPTMnet" id="Q9ULS6"/>
<dbReference type="PhosphoSitePlus" id="Q9ULS6"/>
<dbReference type="BioMuta" id="KCNS2"/>
<dbReference type="DMDM" id="24418481"/>
<dbReference type="MassIVE" id="Q9ULS6"/>
<dbReference type="PaxDb" id="9606-ENSP00000287042"/>
<dbReference type="PeptideAtlas" id="Q9ULS6"/>
<dbReference type="ProteomicsDB" id="85103"/>
<dbReference type="Antibodypedia" id="26073">
    <property type="antibodies" value="184 antibodies from 26 providers"/>
</dbReference>
<dbReference type="DNASU" id="3788"/>
<dbReference type="Ensembl" id="ENST00000287042.5">
    <property type="protein sequence ID" value="ENSP00000287042.4"/>
    <property type="gene ID" value="ENSG00000156486.8"/>
</dbReference>
<dbReference type="Ensembl" id="ENST00000521839.1">
    <property type="protein sequence ID" value="ENSP00000430712.1"/>
    <property type="gene ID" value="ENSG00000156486.8"/>
</dbReference>
<dbReference type="GeneID" id="3788"/>
<dbReference type="KEGG" id="hsa:3788"/>
<dbReference type="MANE-Select" id="ENST00000287042.5">
    <property type="protein sequence ID" value="ENSP00000287042.4"/>
    <property type="RefSeq nucleotide sequence ID" value="NM_020697.4"/>
    <property type="RefSeq protein sequence ID" value="NP_065748.1"/>
</dbReference>
<dbReference type="UCSC" id="uc003yin.4">
    <property type="organism name" value="human"/>
</dbReference>
<dbReference type="AGR" id="HGNC:6301"/>
<dbReference type="CTD" id="3788"/>
<dbReference type="DisGeNET" id="3788"/>
<dbReference type="GeneCards" id="KCNS2"/>
<dbReference type="HGNC" id="HGNC:6301">
    <property type="gene designation" value="KCNS2"/>
</dbReference>
<dbReference type="HPA" id="ENSG00000156486">
    <property type="expression patterns" value="Tissue enhanced (brain)"/>
</dbReference>
<dbReference type="MIM" id="602906">
    <property type="type" value="gene"/>
</dbReference>
<dbReference type="neXtProt" id="NX_Q9ULS6"/>
<dbReference type="OpenTargets" id="ENSG00000156486"/>
<dbReference type="PharmGKB" id="PA30079"/>
<dbReference type="VEuPathDB" id="HostDB:ENSG00000156486"/>
<dbReference type="eggNOG" id="KOG3713">
    <property type="taxonomic scope" value="Eukaryota"/>
</dbReference>
<dbReference type="GeneTree" id="ENSGT00940000160344"/>
<dbReference type="HOGENOM" id="CLU_011722_4_1_1"/>
<dbReference type="InParanoid" id="Q9ULS6"/>
<dbReference type="OMA" id="DWDERSE"/>
<dbReference type="OrthoDB" id="296522at2759"/>
<dbReference type="PAN-GO" id="Q9ULS6">
    <property type="GO annotations" value="5 GO annotations based on evolutionary models"/>
</dbReference>
<dbReference type="PhylomeDB" id="Q9ULS6"/>
<dbReference type="TreeFam" id="TF313103"/>
<dbReference type="PathwayCommons" id="Q9ULS6"/>
<dbReference type="Reactome" id="R-HSA-1296072">
    <property type="pathway name" value="Voltage gated Potassium channels"/>
</dbReference>
<dbReference type="SignaLink" id="Q9ULS6"/>
<dbReference type="BioGRID-ORCS" id="3788">
    <property type="hits" value="9 hits in 1144 CRISPR screens"/>
</dbReference>
<dbReference type="GeneWiki" id="KCNS2"/>
<dbReference type="GenomeRNAi" id="3788"/>
<dbReference type="Pharos" id="Q9ULS6">
    <property type="development level" value="Tclin"/>
</dbReference>
<dbReference type="PRO" id="PR:Q9ULS6"/>
<dbReference type="Proteomes" id="UP000005640">
    <property type="component" value="Chromosome 8"/>
</dbReference>
<dbReference type="RNAct" id="Q9ULS6">
    <property type="molecule type" value="protein"/>
</dbReference>
<dbReference type="Bgee" id="ENSG00000156486">
    <property type="expression patterns" value="Expressed in endothelial cell and 105 other cell types or tissues"/>
</dbReference>
<dbReference type="GO" id="GO:0016020">
    <property type="term" value="C:membrane"/>
    <property type="evidence" value="ECO:0000318"/>
    <property type="project" value="GO_Central"/>
</dbReference>
<dbReference type="GO" id="GO:0048471">
    <property type="term" value="C:perinuclear region of cytoplasm"/>
    <property type="evidence" value="ECO:0000250"/>
    <property type="project" value="UniProtKB"/>
</dbReference>
<dbReference type="GO" id="GO:0005886">
    <property type="term" value="C:plasma membrane"/>
    <property type="evidence" value="ECO:0000250"/>
    <property type="project" value="UniProtKB"/>
</dbReference>
<dbReference type="GO" id="GO:0008076">
    <property type="term" value="C:voltage-gated potassium channel complex"/>
    <property type="evidence" value="ECO:0000250"/>
    <property type="project" value="UniProtKB"/>
</dbReference>
<dbReference type="GO" id="GO:0015459">
    <property type="term" value="F:potassium channel regulator activity"/>
    <property type="evidence" value="ECO:0000250"/>
    <property type="project" value="UniProtKB"/>
</dbReference>
<dbReference type="GO" id="GO:0005249">
    <property type="term" value="F:voltage-gated potassium channel activity"/>
    <property type="evidence" value="ECO:0007669"/>
    <property type="project" value="InterPro"/>
</dbReference>
<dbReference type="GO" id="GO:0001508">
    <property type="term" value="P:action potential"/>
    <property type="evidence" value="ECO:0000318"/>
    <property type="project" value="GO_Central"/>
</dbReference>
<dbReference type="GO" id="GO:0071805">
    <property type="term" value="P:potassium ion transmembrane transport"/>
    <property type="evidence" value="ECO:0000318"/>
    <property type="project" value="GO_Central"/>
</dbReference>
<dbReference type="GO" id="GO:0006813">
    <property type="term" value="P:potassium ion transport"/>
    <property type="evidence" value="ECO:0000250"/>
    <property type="project" value="UniProtKB"/>
</dbReference>
<dbReference type="GO" id="GO:0051260">
    <property type="term" value="P:protein homooligomerization"/>
    <property type="evidence" value="ECO:0007669"/>
    <property type="project" value="InterPro"/>
</dbReference>
<dbReference type="GO" id="GO:1901379">
    <property type="term" value="P:regulation of potassium ion transmembrane transport"/>
    <property type="evidence" value="ECO:0000250"/>
    <property type="project" value="UniProtKB"/>
</dbReference>
<dbReference type="CDD" id="cd18427">
    <property type="entry name" value="BTB_POZ_KCNS2"/>
    <property type="match status" value="1"/>
</dbReference>
<dbReference type="FunFam" id="1.10.287.70:FF:000005">
    <property type="entry name" value="potassium voltage-gated channel subfamily G member 1"/>
    <property type="match status" value="1"/>
</dbReference>
<dbReference type="FunFam" id="1.20.120.350:FF:000029">
    <property type="entry name" value="Potassium voltage-gated channel subfamily S member 2"/>
    <property type="match status" value="1"/>
</dbReference>
<dbReference type="FunFam" id="3.30.710.10:FF:000029">
    <property type="entry name" value="potassium voltage-gated channel subfamily S member 2"/>
    <property type="match status" value="1"/>
</dbReference>
<dbReference type="Gene3D" id="1.10.287.70">
    <property type="match status" value="1"/>
</dbReference>
<dbReference type="Gene3D" id="3.30.710.10">
    <property type="entry name" value="Potassium Channel Kv1.1, Chain A"/>
    <property type="match status" value="1"/>
</dbReference>
<dbReference type="Gene3D" id="1.20.120.350">
    <property type="entry name" value="Voltage-gated potassium channels. Chain C"/>
    <property type="match status" value="1"/>
</dbReference>
<dbReference type="InterPro" id="IPR000210">
    <property type="entry name" value="BTB/POZ_dom"/>
</dbReference>
<dbReference type="InterPro" id="IPR005821">
    <property type="entry name" value="Ion_trans_dom"/>
</dbReference>
<dbReference type="InterPro" id="IPR003968">
    <property type="entry name" value="K_chnl_volt-dep_Kv"/>
</dbReference>
<dbReference type="InterPro" id="IPR003971">
    <property type="entry name" value="K_chnl_volt-dep_Kv5/Kv9"/>
</dbReference>
<dbReference type="InterPro" id="IPR011333">
    <property type="entry name" value="SKP1/BTB/POZ_sf"/>
</dbReference>
<dbReference type="InterPro" id="IPR003131">
    <property type="entry name" value="T1-type_BTB"/>
</dbReference>
<dbReference type="InterPro" id="IPR028325">
    <property type="entry name" value="VG_K_chnl"/>
</dbReference>
<dbReference type="InterPro" id="IPR027359">
    <property type="entry name" value="Volt_channel_dom_sf"/>
</dbReference>
<dbReference type="PANTHER" id="PTHR11537:SF60">
    <property type="entry name" value="POTASSIUM VOLTAGE-GATED CHANNEL SUBFAMILY S MEMBER 2"/>
    <property type="match status" value="1"/>
</dbReference>
<dbReference type="PANTHER" id="PTHR11537">
    <property type="entry name" value="VOLTAGE-GATED POTASSIUM CHANNEL"/>
    <property type="match status" value="1"/>
</dbReference>
<dbReference type="Pfam" id="PF02214">
    <property type="entry name" value="BTB_2"/>
    <property type="match status" value="1"/>
</dbReference>
<dbReference type="Pfam" id="PF00520">
    <property type="entry name" value="Ion_trans"/>
    <property type="match status" value="1"/>
</dbReference>
<dbReference type="PRINTS" id="PR00169">
    <property type="entry name" value="KCHANNEL"/>
</dbReference>
<dbReference type="PRINTS" id="PR01494">
    <property type="entry name" value="KV9CHANNEL"/>
</dbReference>
<dbReference type="PRINTS" id="PR01491">
    <property type="entry name" value="KVCHANNEL"/>
</dbReference>
<dbReference type="SMART" id="SM00225">
    <property type="entry name" value="BTB"/>
    <property type="match status" value="1"/>
</dbReference>
<dbReference type="SUPFAM" id="SSF54695">
    <property type="entry name" value="POZ domain"/>
    <property type="match status" value="1"/>
</dbReference>
<dbReference type="SUPFAM" id="SSF81324">
    <property type="entry name" value="Voltage-gated potassium channels"/>
    <property type="match status" value="1"/>
</dbReference>
<evidence type="ECO:0000250" key="1">
    <source>
        <dbReference type="UniProtKB" id="O35174"/>
    </source>
</evidence>
<evidence type="ECO:0000250" key="2">
    <source>
        <dbReference type="UniProtKB" id="P63142"/>
    </source>
</evidence>
<evidence type="ECO:0000305" key="3"/>
<evidence type="ECO:0000312" key="4">
    <source>
        <dbReference type="HGNC" id="HGNC:6301"/>
    </source>
</evidence>